<protein>
    <recommendedName>
        <fullName evidence="1">Small ribosomal subunit protein uS13</fullName>
    </recommendedName>
    <alternativeName>
        <fullName evidence="3">30S ribosomal protein S13</fullName>
    </alternativeName>
</protein>
<dbReference type="EMBL" id="CP000088">
    <property type="protein sequence ID" value="AAZ56653.1"/>
    <property type="molecule type" value="Genomic_DNA"/>
</dbReference>
<dbReference type="RefSeq" id="WP_011293043.1">
    <property type="nucleotide sequence ID" value="NC_007333.1"/>
</dbReference>
<dbReference type="SMR" id="Q47LL9"/>
<dbReference type="STRING" id="269800.Tfu_2620"/>
<dbReference type="KEGG" id="tfu:Tfu_2620"/>
<dbReference type="eggNOG" id="COG0099">
    <property type="taxonomic scope" value="Bacteria"/>
</dbReference>
<dbReference type="HOGENOM" id="CLU_103849_1_2_11"/>
<dbReference type="OrthoDB" id="9803610at2"/>
<dbReference type="GO" id="GO:0005829">
    <property type="term" value="C:cytosol"/>
    <property type="evidence" value="ECO:0007669"/>
    <property type="project" value="TreeGrafter"/>
</dbReference>
<dbReference type="GO" id="GO:0015935">
    <property type="term" value="C:small ribosomal subunit"/>
    <property type="evidence" value="ECO:0007669"/>
    <property type="project" value="TreeGrafter"/>
</dbReference>
<dbReference type="GO" id="GO:0019843">
    <property type="term" value="F:rRNA binding"/>
    <property type="evidence" value="ECO:0007669"/>
    <property type="project" value="UniProtKB-UniRule"/>
</dbReference>
<dbReference type="GO" id="GO:0003735">
    <property type="term" value="F:structural constituent of ribosome"/>
    <property type="evidence" value="ECO:0007669"/>
    <property type="project" value="InterPro"/>
</dbReference>
<dbReference type="GO" id="GO:0000049">
    <property type="term" value="F:tRNA binding"/>
    <property type="evidence" value="ECO:0007669"/>
    <property type="project" value="UniProtKB-UniRule"/>
</dbReference>
<dbReference type="GO" id="GO:0006412">
    <property type="term" value="P:translation"/>
    <property type="evidence" value="ECO:0007669"/>
    <property type="project" value="UniProtKB-UniRule"/>
</dbReference>
<dbReference type="FunFam" id="1.10.8.50:FF:000001">
    <property type="entry name" value="30S ribosomal protein S13"/>
    <property type="match status" value="1"/>
</dbReference>
<dbReference type="FunFam" id="4.10.910.10:FF:000001">
    <property type="entry name" value="30S ribosomal protein S13"/>
    <property type="match status" value="1"/>
</dbReference>
<dbReference type="Gene3D" id="1.10.8.50">
    <property type="match status" value="1"/>
</dbReference>
<dbReference type="Gene3D" id="4.10.910.10">
    <property type="entry name" value="30s ribosomal protein s13, domain 2"/>
    <property type="match status" value="1"/>
</dbReference>
<dbReference type="HAMAP" id="MF_01315">
    <property type="entry name" value="Ribosomal_uS13"/>
    <property type="match status" value="1"/>
</dbReference>
<dbReference type="InterPro" id="IPR027437">
    <property type="entry name" value="Rbsml_uS13_C"/>
</dbReference>
<dbReference type="InterPro" id="IPR001892">
    <property type="entry name" value="Ribosomal_uS13"/>
</dbReference>
<dbReference type="InterPro" id="IPR010979">
    <property type="entry name" value="Ribosomal_uS13-like_H2TH"/>
</dbReference>
<dbReference type="InterPro" id="IPR019980">
    <property type="entry name" value="Ribosomal_uS13_bac-type"/>
</dbReference>
<dbReference type="InterPro" id="IPR018269">
    <property type="entry name" value="Ribosomal_uS13_CS"/>
</dbReference>
<dbReference type="NCBIfam" id="TIGR03631">
    <property type="entry name" value="uS13_bact"/>
    <property type="match status" value="1"/>
</dbReference>
<dbReference type="PANTHER" id="PTHR10871">
    <property type="entry name" value="30S RIBOSOMAL PROTEIN S13/40S RIBOSOMAL PROTEIN S18"/>
    <property type="match status" value="1"/>
</dbReference>
<dbReference type="PANTHER" id="PTHR10871:SF1">
    <property type="entry name" value="SMALL RIBOSOMAL SUBUNIT PROTEIN US13M"/>
    <property type="match status" value="1"/>
</dbReference>
<dbReference type="Pfam" id="PF00416">
    <property type="entry name" value="Ribosomal_S13"/>
    <property type="match status" value="1"/>
</dbReference>
<dbReference type="PIRSF" id="PIRSF002134">
    <property type="entry name" value="Ribosomal_S13"/>
    <property type="match status" value="1"/>
</dbReference>
<dbReference type="SUPFAM" id="SSF46946">
    <property type="entry name" value="S13-like H2TH domain"/>
    <property type="match status" value="1"/>
</dbReference>
<dbReference type="PROSITE" id="PS00646">
    <property type="entry name" value="RIBOSOMAL_S13_1"/>
    <property type="match status" value="1"/>
</dbReference>
<dbReference type="PROSITE" id="PS50159">
    <property type="entry name" value="RIBOSOMAL_S13_2"/>
    <property type="match status" value="1"/>
</dbReference>
<evidence type="ECO:0000255" key="1">
    <source>
        <dbReference type="HAMAP-Rule" id="MF_01315"/>
    </source>
</evidence>
<evidence type="ECO:0000256" key="2">
    <source>
        <dbReference type="SAM" id="MobiDB-lite"/>
    </source>
</evidence>
<evidence type="ECO:0000305" key="3"/>
<feature type="chain" id="PRO_0000230574" description="Small ribosomal subunit protein uS13">
    <location>
        <begin position="1"/>
        <end position="126"/>
    </location>
</feature>
<feature type="region of interest" description="Disordered" evidence="2">
    <location>
        <begin position="95"/>
        <end position="126"/>
    </location>
</feature>
<feature type="compositionally biased region" description="Basic residues" evidence="2">
    <location>
        <begin position="108"/>
        <end position="126"/>
    </location>
</feature>
<accession>Q47LL9</accession>
<reference key="1">
    <citation type="journal article" date="2007" name="J. Bacteriol.">
        <title>Genome sequence and analysis of the soil cellulolytic actinomycete Thermobifida fusca YX.</title>
        <authorList>
            <person name="Lykidis A."/>
            <person name="Mavromatis K."/>
            <person name="Ivanova N."/>
            <person name="Anderson I."/>
            <person name="Land M."/>
            <person name="DiBartolo G."/>
            <person name="Martinez M."/>
            <person name="Lapidus A."/>
            <person name="Lucas S."/>
            <person name="Copeland A."/>
            <person name="Richardson P."/>
            <person name="Wilson D.B."/>
            <person name="Kyrpides N."/>
        </authorList>
    </citation>
    <scope>NUCLEOTIDE SEQUENCE [LARGE SCALE GENOMIC DNA]</scope>
    <source>
        <strain>YX</strain>
    </source>
</reference>
<organism>
    <name type="scientific">Thermobifida fusca (strain YX)</name>
    <dbReference type="NCBI Taxonomy" id="269800"/>
    <lineage>
        <taxon>Bacteria</taxon>
        <taxon>Bacillati</taxon>
        <taxon>Actinomycetota</taxon>
        <taxon>Actinomycetes</taxon>
        <taxon>Streptosporangiales</taxon>
        <taxon>Nocardiopsidaceae</taxon>
        <taxon>Thermobifida</taxon>
    </lineage>
</organism>
<gene>
    <name evidence="1" type="primary">rpsM</name>
    <name type="ordered locus">Tfu_2620</name>
</gene>
<keyword id="KW-0687">Ribonucleoprotein</keyword>
<keyword id="KW-0689">Ribosomal protein</keyword>
<keyword id="KW-0694">RNA-binding</keyword>
<keyword id="KW-0699">rRNA-binding</keyword>
<keyword id="KW-0820">tRNA-binding</keyword>
<comment type="function">
    <text evidence="1">Located at the top of the head of the 30S subunit, it contacts several helices of the 16S rRNA. In the 70S ribosome it contacts the 23S rRNA (bridge B1a) and protein L5 of the 50S subunit (bridge B1b), connecting the 2 subunits; these bridges are implicated in subunit movement. Contacts the tRNAs in the A and P-sites.</text>
</comment>
<comment type="subunit">
    <text evidence="1">Part of the 30S ribosomal subunit. Forms a loose heterodimer with protein S19. Forms two bridges to the 50S subunit in the 70S ribosome.</text>
</comment>
<comment type="similarity">
    <text evidence="1">Belongs to the universal ribosomal protein uS13 family.</text>
</comment>
<name>RS13_THEFY</name>
<sequence length="126" mass="14333">MARIAGVDLPRDKRVEVALTYVYGIGRSRAAETLANTGVNPDTRVYQLTEEELVKLREWIDANYKVEGDLRREVAADIRRKIEIGCYQGIRHRRGLPVRGQRTQTNARTRKGKKKTVAGKKKAGRK</sequence>
<proteinExistence type="inferred from homology"/>